<feature type="chain" id="PRO_0000069920" description="Neuropeptide Y receptor type 1">
    <location>
        <begin position="1"/>
        <end position="384"/>
    </location>
</feature>
<feature type="topological domain" description="Extracellular" evidence="2">
    <location>
        <begin position="1"/>
        <end position="44"/>
    </location>
</feature>
<feature type="transmembrane region" description="Helical; Name=1" evidence="2">
    <location>
        <begin position="45"/>
        <end position="65"/>
    </location>
</feature>
<feature type="topological domain" description="Cytoplasmic" evidence="2">
    <location>
        <begin position="66"/>
        <end position="76"/>
    </location>
</feature>
<feature type="transmembrane region" description="Helical; Name=2" evidence="2">
    <location>
        <begin position="77"/>
        <end position="97"/>
    </location>
</feature>
<feature type="topological domain" description="Extracellular" evidence="2">
    <location>
        <begin position="98"/>
        <end position="116"/>
    </location>
</feature>
<feature type="transmembrane region" description="Helical; Name=3" evidence="2">
    <location>
        <begin position="117"/>
        <end position="137"/>
    </location>
</feature>
<feature type="topological domain" description="Cytoplasmic" evidence="2">
    <location>
        <begin position="138"/>
        <end position="154"/>
    </location>
</feature>
<feature type="transmembrane region" description="Helical; Name=4" evidence="2">
    <location>
        <begin position="155"/>
        <end position="175"/>
    </location>
</feature>
<feature type="topological domain" description="Extracellular" evidence="2">
    <location>
        <begin position="176"/>
        <end position="211"/>
    </location>
</feature>
<feature type="transmembrane region" description="Helical; Name=5" evidence="2">
    <location>
        <begin position="212"/>
        <end position="232"/>
    </location>
</feature>
<feature type="topological domain" description="Cytoplasmic" evidence="2">
    <location>
        <begin position="233"/>
        <end position="260"/>
    </location>
</feature>
<feature type="transmembrane region" description="Helical; Name=6" evidence="2">
    <location>
        <begin position="261"/>
        <end position="281"/>
    </location>
</feature>
<feature type="topological domain" description="Extracellular" evidence="2">
    <location>
        <begin position="282"/>
        <end position="299"/>
    </location>
</feature>
<feature type="transmembrane region" description="Helical; Name=7" evidence="2">
    <location>
        <begin position="300"/>
        <end position="320"/>
    </location>
</feature>
<feature type="topological domain" description="Cytoplasmic" evidence="2">
    <location>
        <begin position="321"/>
        <end position="384"/>
    </location>
</feature>
<feature type="modified residue" description="Phosphoserine" evidence="1">
    <location>
        <position position="368"/>
    </location>
</feature>
<feature type="lipid moiety-binding region" description="S-palmitoyl cysteine" evidence="2">
    <location>
        <position position="338"/>
    </location>
</feature>
<feature type="glycosylation site" description="N-linked (GlcNAc...) asparagine" evidence="2">
    <location>
        <position position="2"/>
    </location>
</feature>
<feature type="glycosylation site" description="N-linked (GlcNAc...) asparagine" evidence="2">
    <location>
        <position position="11"/>
    </location>
</feature>
<feature type="glycosylation site" description="N-linked (GlcNAc...) asparagine" evidence="2">
    <location>
        <position position="17"/>
    </location>
</feature>
<feature type="disulfide bond" evidence="3">
    <location>
        <begin position="113"/>
        <end position="198"/>
    </location>
</feature>
<feature type="sequence variant" id="VAR_014681" description="In dbSNP:rs5578.">
    <original>K</original>
    <variation>T</variation>
    <location>
        <position position="374"/>
    </location>
</feature>
<feature type="sequence conflict" description="In Ref. 2; AAA59920." evidence="4" ref="2">
    <original>F</original>
    <variation>L</variation>
    <location>
        <position position="96"/>
    </location>
</feature>
<feature type="helix" evidence="5">
    <location>
        <begin position="22"/>
        <end position="24"/>
    </location>
</feature>
<feature type="turn" evidence="7">
    <location>
        <begin position="31"/>
        <end position="34"/>
    </location>
</feature>
<feature type="helix" evidence="5">
    <location>
        <begin position="37"/>
        <end position="67"/>
    </location>
</feature>
<feature type="helix" evidence="5">
    <location>
        <begin position="74"/>
        <end position="92"/>
    </location>
</feature>
<feature type="helix" evidence="5">
    <location>
        <begin position="94"/>
        <end position="103"/>
    </location>
</feature>
<feature type="helix" evidence="5">
    <location>
        <begin position="110"/>
        <end position="142"/>
    </location>
</feature>
<feature type="turn" evidence="5">
    <location>
        <begin position="145"/>
        <end position="147"/>
    </location>
</feature>
<feature type="helix" evidence="5">
    <location>
        <begin position="152"/>
        <end position="176"/>
    </location>
</feature>
<feature type="strand" evidence="5">
    <location>
        <begin position="177"/>
        <end position="180"/>
    </location>
</feature>
<feature type="helix" evidence="5">
    <location>
        <begin position="182"/>
        <end position="184"/>
    </location>
</feature>
<feature type="strand" evidence="8">
    <location>
        <begin position="185"/>
        <end position="188"/>
    </location>
</feature>
<feature type="strand" evidence="5">
    <location>
        <begin position="197"/>
        <end position="200"/>
    </location>
</feature>
<feature type="helix" evidence="5">
    <location>
        <begin position="205"/>
        <end position="219"/>
    </location>
</feature>
<feature type="helix" evidence="5">
    <location>
        <begin position="221"/>
        <end position="240"/>
    </location>
</feature>
<feature type="helix" evidence="6">
    <location>
        <begin position="241"/>
        <end position="244"/>
    </location>
</feature>
<feature type="helix" evidence="5">
    <location>
        <begin position="259"/>
        <end position="288"/>
    </location>
</feature>
<feature type="strand" evidence="5">
    <location>
        <begin position="292"/>
        <end position="294"/>
    </location>
</feature>
<feature type="helix" evidence="5">
    <location>
        <begin position="296"/>
        <end position="321"/>
    </location>
</feature>
<feature type="helix" evidence="5">
    <location>
        <begin position="325"/>
        <end position="334"/>
    </location>
</feature>
<proteinExistence type="evidence at protein level"/>
<dbReference type="EMBL" id="M88461">
    <property type="protein sequence ID" value="AAA73215.1"/>
    <property type="molecule type" value="mRNA"/>
</dbReference>
<dbReference type="EMBL" id="M84755">
    <property type="protein sequence ID" value="AAA59920.1"/>
    <property type="molecule type" value="mRNA"/>
</dbReference>
<dbReference type="EMBL" id="L07614">
    <property type="status" value="NOT_ANNOTATED_CDS"/>
    <property type="molecule type" value="mRNA"/>
</dbReference>
<dbReference type="EMBL" id="L07615">
    <property type="protein sequence ID" value="AAA59947.1"/>
    <property type="molecule type" value="mRNA"/>
</dbReference>
<dbReference type="EMBL" id="AY548168">
    <property type="protein sequence ID" value="AAS55647.1"/>
    <property type="molecule type" value="mRNA"/>
</dbReference>
<dbReference type="EMBL" id="AK312578">
    <property type="protein sequence ID" value="BAG35472.1"/>
    <property type="molecule type" value="mRNA"/>
</dbReference>
<dbReference type="EMBL" id="CH471056">
    <property type="protein sequence ID" value="EAX04841.1"/>
    <property type="molecule type" value="Genomic_DNA"/>
</dbReference>
<dbReference type="EMBL" id="BC036657">
    <property type="protein sequence ID" value="AAH36657.1"/>
    <property type="molecule type" value="mRNA"/>
</dbReference>
<dbReference type="EMBL" id="BC071720">
    <property type="protein sequence ID" value="AAH71720.1"/>
    <property type="molecule type" value="mRNA"/>
</dbReference>
<dbReference type="CCDS" id="CCDS34089.1"/>
<dbReference type="PIR" id="A45490">
    <property type="entry name" value="A45490"/>
</dbReference>
<dbReference type="RefSeq" id="NP_000900.1">
    <property type="nucleotide sequence ID" value="NM_000909.6"/>
</dbReference>
<dbReference type="RefSeq" id="XP_005263088.1">
    <property type="nucleotide sequence ID" value="XM_005263031.5"/>
</dbReference>
<dbReference type="RefSeq" id="XP_011530312.1">
    <property type="nucleotide sequence ID" value="XM_011532010.4"/>
</dbReference>
<dbReference type="RefSeq" id="XP_054206094.1">
    <property type="nucleotide sequence ID" value="XM_054350119.1"/>
</dbReference>
<dbReference type="RefSeq" id="XP_054206095.1">
    <property type="nucleotide sequence ID" value="XM_054350120.1"/>
</dbReference>
<dbReference type="PDB" id="5ZBQ">
    <property type="method" value="X-ray"/>
    <property type="resolution" value="2.70 A"/>
    <property type="chains" value="A=2-358"/>
</dbReference>
<dbReference type="PDB" id="7VGX">
    <property type="method" value="EM"/>
    <property type="resolution" value="3.20 A"/>
    <property type="chains" value="R=1-384"/>
</dbReference>
<dbReference type="PDB" id="7X9A">
    <property type="method" value="EM"/>
    <property type="resolution" value="3.20 A"/>
    <property type="chains" value="R=1-340"/>
</dbReference>
<dbReference type="PDB" id="8K6M">
    <property type="method" value="EM"/>
    <property type="resolution" value="3.30 A"/>
    <property type="chains" value="D=1-349"/>
</dbReference>
<dbReference type="PDB" id="8K6O">
    <property type="method" value="EM"/>
    <property type="resolution" value="3.30 A"/>
    <property type="chains" value="D=1-341"/>
</dbReference>
<dbReference type="PDBsum" id="5ZBQ"/>
<dbReference type="PDBsum" id="7VGX"/>
<dbReference type="PDBsum" id="7X9A"/>
<dbReference type="PDBsum" id="8K6M"/>
<dbReference type="PDBsum" id="8K6O"/>
<dbReference type="BMRB" id="P25929"/>
<dbReference type="EMDB" id="EMD-31979"/>
<dbReference type="EMDB" id="EMD-33069"/>
<dbReference type="EMDB" id="EMD-36923"/>
<dbReference type="EMDB" id="EMD-36925"/>
<dbReference type="SMR" id="P25929"/>
<dbReference type="BioGRID" id="110946">
    <property type="interactions" value="3"/>
</dbReference>
<dbReference type="FunCoup" id="P25929">
    <property type="interactions" value="1079"/>
</dbReference>
<dbReference type="IntAct" id="P25929">
    <property type="interactions" value="5"/>
</dbReference>
<dbReference type="STRING" id="9606.ENSP00000354652"/>
<dbReference type="BindingDB" id="P25929"/>
<dbReference type="ChEMBL" id="CHEMBL4777"/>
<dbReference type="DrugBank" id="DB05004">
    <property type="generic name" value="Peptide YY (3-36)"/>
</dbReference>
<dbReference type="GuidetoPHARMACOLOGY" id="305"/>
<dbReference type="GlyCosmos" id="P25929">
    <property type="glycosylation" value="3 sites, No reported glycans"/>
</dbReference>
<dbReference type="GlyGen" id="P25929">
    <property type="glycosylation" value="3 sites"/>
</dbReference>
<dbReference type="iPTMnet" id="P25929"/>
<dbReference type="PhosphoSitePlus" id="P25929"/>
<dbReference type="SwissPalm" id="P25929"/>
<dbReference type="BioMuta" id="NPY1R"/>
<dbReference type="DMDM" id="128997"/>
<dbReference type="MassIVE" id="P25929"/>
<dbReference type="PaxDb" id="9606-ENSP00000354652"/>
<dbReference type="PeptideAtlas" id="P25929"/>
<dbReference type="ProteomicsDB" id="54300"/>
<dbReference type="Antibodypedia" id="16963">
    <property type="antibodies" value="440 antibodies from 37 providers"/>
</dbReference>
<dbReference type="DNASU" id="4886"/>
<dbReference type="Ensembl" id="ENST00000296533.3">
    <property type="protein sequence ID" value="ENSP00000354652.2"/>
    <property type="gene ID" value="ENSG00000164128.7"/>
</dbReference>
<dbReference type="GeneID" id="4886"/>
<dbReference type="KEGG" id="hsa:4886"/>
<dbReference type="MANE-Select" id="ENST00000296533.3">
    <property type="protein sequence ID" value="ENSP00000354652.2"/>
    <property type="RefSeq nucleotide sequence ID" value="NM_000909.6"/>
    <property type="RefSeq protein sequence ID" value="NP_000900.1"/>
</dbReference>
<dbReference type="UCSC" id="uc003iqm.3">
    <property type="organism name" value="human"/>
</dbReference>
<dbReference type="AGR" id="HGNC:7956"/>
<dbReference type="CTD" id="4886"/>
<dbReference type="DisGeNET" id="4886"/>
<dbReference type="GeneCards" id="NPY1R"/>
<dbReference type="HGNC" id="HGNC:7956">
    <property type="gene designation" value="NPY1R"/>
</dbReference>
<dbReference type="HPA" id="ENSG00000164128">
    <property type="expression patterns" value="Tissue enhanced (lymphoid)"/>
</dbReference>
<dbReference type="MIM" id="162641">
    <property type="type" value="gene"/>
</dbReference>
<dbReference type="neXtProt" id="NX_P25929"/>
<dbReference type="OpenTargets" id="ENSG00000164128"/>
<dbReference type="PharmGKB" id="PA258"/>
<dbReference type="VEuPathDB" id="HostDB:ENSG00000164128"/>
<dbReference type="eggNOG" id="KOG3656">
    <property type="taxonomic scope" value="Eukaryota"/>
</dbReference>
<dbReference type="GeneTree" id="ENSGT00940000160268"/>
<dbReference type="HOGENOM" id="CLU_009579_6_1_1"/>
<dbReference type="InParanoid" id="P25929"/>
<dbReference type="OMA" id="QFFFHFC"/>
<dbReference type="OrthoDB" id="9046662at2759"/>
<dbReference type="PAN-GO" id="P25929">
    <property type="GO annotations" value="4 GO annotations based on evolutionary models"/>
</dbReference>
<dbReference type="PhylomeDB" id="P25929"/>
<dbReference type="TreeFam" id="TF315303"/>
<dbReference type="PathwayCommons" id="P25929"/>
<dbReference type="Reactome" id="R-HSA-375276">
    <property type="pathway name" value="Peptide ligand-binding receptors"/>
</dbReference>
<dbReference type="Reactome" id="R-HSA-418594">
    <property type="pathway name" value="G alpha (i) signalling events"/>
</dbReference>
<dbReference type="SignaLink" id="P25929"/>
<dbReference type="SIGNOR" id="P25929"/>
<dbReference type="BioGRID-ORCS" id="4886">
    <property type="hits" value="14 hits in 1138 CRISPR screens"/>
</dbReference>
<dbReference type="ChiTaRS" id="NPY1R">
    <property type="organism name" value="human"/>
</dbReference>
<dbReference type="GeneWiki" id="Neuropeptide_Y_receptor_Y1"/>
<dbReference type="GenomeRNAi" id="4886"/>
<dbReference type="Pharos" id="P25929">
    <property type="development level" value="Tchem"/>
</dbReference>
<dbReference type="PRO" id="PR:P25929"/>
<dbReference type="Proteomes" id="UP000005640">
    <property type="component" value="Chromosome 4"/>
</dbReference>
<dbReference type="RNAct" id="P25929">
    <property type="molecule type" value="protein"/>
</dbReference>
<dbReference type="Bgee" id="ENSG00000164128">
    <property type="expression patterns" value="Expressed in blood vessel layer and 126 other cell types or tissues"/>
</dbReference>
<dbReference type="ExpressionAtlas" id="P25929">
    <property type="expression patterns" value="baseline and differential"/>
</dbReference>
<dbReference type="GO" id="GO:0043005">
    <property type="term" value="C:neuron projection"/>
    <property type="evidence" value="ECO:0000318"/>
    <property type="project" value="GO_Central"/>
</dbReference>
<dbReference type="GO" id="GO:0005886">
    <property type="term" value="C:plasma membrane"/>
    <property type="evidence" value="ECO:0000318"/>
    <property type="project" value="GO_Central"/>
</dbReference>
<dbReference type="GO" id="GO:0042923">
    <property type="term" value="F:neuropeptide binding"/>
    <property type="evidence" value="ECO:0000318"/>
    <property type="project" value="GO_Central"/>
</dbReference>
<dbReference type="GO" id="GO:0008188">
    <property type="term" value="F:neuropeptide receptor activity"/>
    <property type="evidence" value="ECO:0000318"/>
    <property type="project" value="GO_Central"/>
</dbReference>
<dbReference type="GO" id="GO:0004983">
    <property type="term" value="F:neuropeptide Y receptor activity"/>
    <property type="evidence" value="ECO:0000304"/>
    <property type="project" value="ProtInc"/>
</dbReference>
<dbReference type="GO" id="GO:0001602">
    <property type="term" value="F:pancreatic polypeptide receptor activity"/>
    <property type="evidence" value="ECO:0007669"/>
    <property type="project" value="Ensembl"/>
</dbReference>
<dbReference type="GO" id="GO:0001601">
    <property type="term" value="F:peptide YY receptor activity"/>
    <property type="evidence" value="ECO:0007669"/>
    <property type="project" value="Ensembl"/>
</dbReference>
<dbReference type="GO" id="GO:0007193">
    <property type="term" value="P:adenylate cyclase-inhibiting G protein-coupled receptor signaling pathway"/>
    <property type="evidence" value="ECO:0000304"/>
    <property type="project" value="ProtInc"/>
</dbReference>
<dbReference type="GO" id="GO:0007631">
    <property type="term" value="P:feeding behavior"/>
    <property type="evidence" value="ECO:0007669"/>
    <property type="project" value="Ensembl"/>
</dbReference>
<dbReference type="GO" id="GO:0007187">
    <property type="term" value="P:G protein-coupled receptor signaling pathway, coupled to cyclic nucleotide second messenger"/>
    <property type="evidence" value="ECO:0000304"/>
    <property type="project" value="ProtInc"/>
</dbReference>
<dbReference type="GO" id="GO:0006006">
    <property type="term" value="P:glucose metabolic process"/>
    <property type="evidence" value="ECO:0007669"/>
    <property type="project" value="Ensembl"/>
</dbReference>
<dbReference type="GO" id="GO:0007626">
    <property type="term" value="P:locomotory behavior"/>
    <property type="evidence" value="ECO:0007669"/>
    <property type="project" value="Ensembl"/>
</dbReference>
<dbReference type="GO" id="GO:0003151">
    <property type="term" value="P:outflow tract morphogenesis"/>
    <property type="evidence" value="ECO:0000315"/>
    <property type="project" value="BHF-UCL"/>
</dbReference>
<dbReference type="GO" id="GO:0008217">
    <property type="term" value="P:regulation of blood pressure"/>
    <property type="evidence" value="ECO:0007669"/>
    <property type="project" value="Ensembl"/>
</dbReference>
<dbReference type="GO" id="GO:0040014">
    <property type="term" value="P:regulation of multicellular organism growth"/>
    <property type="evidence" value="ECO:0007669"/>
    <property type="project" value="Ensembl"/>
</dbReference>
<dbReference type="GO" id="GO:0019233">
    <property type="term" value="P:sensory perception of pain"/>
    <property type="evidence" value="ECO:0007669"/>
    <property type="project" value="Ensembl"/>
</dbReference>
<dbReference type="CDD" id="cd15395">
    <property type="entry name" value="7tmA_NPY1R"/>
    <property type="match status" value="1"/>
</dbReference>
<dbReference type="FunFam" id="1.20.1070.10:FF:000062">
    <property type="entry name" value="Neuropeptide Y receptor type 1"/>
    <property type="match status" value="1"/>
</dbReference>
<dbReference type="Gene3D" id="1.20.1070.10">
    <property type="entry name" value="Rhodopsin 7-helix transmembrane proteins"/>
    <property type="match status" value="1"/>
</dbReference>
<dbReference type="InterPro" id="IPR000276">
    <property type="entry name" value="GPCR_Rhodpsn"/>
</dbReference>
<dbReference type="InterPro" id="IPR017452">
    <property type="entry name" value="GPCR_Rhodpsn_7TM"/>
</dbReference>
<dbReference type="InterPro" id="IPR000351">
    <property type="entry name" value="NPY1_rcpt"/>
</dbReference>
<dbReference type="InterPro" id="IPR000611">
    <property type="entry name" value="NPY_rcpt"/>
</dbReference>
<dbReference type="PANTHER" id="PTHR24235">
    <property type="entry name" value="NEUROPEPTIDE Y RECEPTOR"/>
    <property type="match status" value="1"/>
</dbReference>
<dbReference type="PANTHER" id="PTHR24235:SF24">
    <property type="entry name" value="NEUROPEPTIDE Y RECEPTOR TYPE 1"/>
    <property type="match status" value="1"/>
</dbReference>
<dbReference type="Pfam" id="PF00001">
    <property type="entry name" value="7tm_1"/>
    <property type="match status" value="1"/>
</dbReference>
<dbReference type="PRINTS" id="PR00237">
    <property type="entry name" value="GPCRRHODOPSN"/>
</dbReference>
<dbReference type="PRINTS" id="PR01013">
    <property type="entry name" value="NRPEPTIDEY1R"/>
</dbReference>
<dbReference type="PRINTS" id="PR01012">
    <property type="entry name" value="NRPEPTIDEYR"/>
</dbReference>
<dbReference type="SUPFAM" id="SSF81321">
    <property type="entry name" value="Family A G protein-coupled receptor-like"/>
    <property type="match status" value="1"/>
</dbReference>
<dbReference type="PROSITE" id="PS00237">
    <property type="entry name" value="G_PROTEIN_RECEP_F1_1"/>
    <property type="match status" value="1"/>
</dbReference>
<dbReference type="PROSITE" id="PS50262">
    <property type="entry name" value="G_PROTEIN_RECEP_F1_2"/>
    <property type="match status" value="1"/>
</dbReference>
<accession>P25929</accession>
<accession>B2R6H5</accession>
<protein>
    <recommendedName>
        <fullName>Neuropeptide Y receptor type 1</fullName>
        <shortName>NPY1-R</shortName>
    </recommendedName>
</protein>
<comment type="function">
    <text>Receptor for neuropeptide Y and peptide YY. The rank order of affinity of this receptor for pancreatic polypeptides is NPY &gt; [Pro-34] PYY, PYY and [Leu-31, Pro-34] NPY &gt; NPY (2-36) &gt; [Ile-31, Gln-34] PP and PYY (3-36) &gt; PP &gt; NPY free acid.</text>
</comment>
<comment type="interaction">
    <interactant intactId="EBI-372227">
        <id>P25929</id>
    </interactant>
    <interactant intactId="EBI-6655667">
        <id>P10082</id>
        <label>PYY</label>
    </interactant>
    <organismsDiffer>false</organismsDiffer>
    <experiments>2</experiments>
</comment>
<comment type="subcellular location">
    <subcellularLocation>
        <location>Cell membrane</location>
        <topology>Multi-pass membrane protein</topology>
    </subcellularLocation>
</comment>
<comment type="similarity">
    <text evidence="3">Belongs to the G-protein coupled receptor 1 family.</text>
</comment>
<comment type="online information" name="Atlas of Genetics and Cytogenetics in Oncology and Haematology">
    <link uri="https://atlasgeneticsoncology.org/gene/44260/NPY1R"/>
</comment>
<gene>
    <name type="primary">NPY1R</name>
    <name type="synonym">NPYR</name>
    <name type="synonym">NPYY1</name>
</gene>
<sequence>MNSTLFSQVENHSVHSNFSEKNAQLLAFENDDCHLPLAMIFTLALAYGAVIILGVSGNLALIIIILKQKEMRNVTNILIVNLSFSDLLVAIMCLPFTFVYTLMDHWVFGEAMCKLNPFVQCVSITVSIFSLVLIAVERHQLIINPRGWRPNNRHAYVGIAVIWVLAVASSLPFLIYQVMTDEPFQNVTLDAYKDKYVCFDQFPSDSHRLSYTTLLLVLQYFGPLCFIFICYFKIYIRLKRRNNMMDKMRDNKYRSSETKRINIMLLSIVVAFAVCWLPLTIFNTVFDWNHQIIATCNHNLLFLLCHLTAMISTCVNPIFYGFLNKNFQRDLQFFFNFCDFRSRDDDYETIAMSTMHTDVSKTSLKQASPVAFKKINNNDDNEKI</sequence>
<name>NPY1R_HUMAN</name>
<evidence type="ECO:0000250" key="1">
    <source>
        <dbReference type="UniProtKB" id="P21555"/>
    </source>
</evidence>
<evidence type="ECO:0000255" key="2"/>
<evidence type="ECO:0000255" key="3">
    <source>
        <dbReference type="PROSITE-ProRule" id="PRU00521"/>
    </source>
</evidence>
<evidence type="ECO:0000305" key="4"/>
<evidence type="ECO:0007829" key="5">
    <source>
        <dbReference type="PDB" id="5ZBQ"/>
    </source>
</evidence>
<evidence type="ECO:0007829" key="6">
    <source>
        <dbReference type="PDB" id="7VGX"/>
    </source>
</evidence>
<evidence type="ECO:0007829" key="7">
    <source>
        <dbReference type="PDB" id="7X9A"/>
    </source>
</evidence>
<evidence type="ECO:0007829" key="8">
    <source>
        <dbReference type="PDB" id="8K6M"/>
    </source>
</evidence>
<organism>
    <name type="scientific">Homo sapiens</name>
    <name type="common">Human</name>
    <dbReference type="NCBI Taxonomy" id="9606"/>
    <lineage>
        <taxon>Eukaryota</taxon>
        <taxon>Metazoa</taxon>
        <taxon>Chordata</taxon>
        <taxon>Craniata</taxon>
        <taxon>Vertebrata</taxon>
        <taxon>Euteleostomi</taxon>
        <taxon>Mammalia</taxon>
        <taxon>Eutheria</taxon>
        <taxon>Euarchontoglires</taxon>
        <taxon>Primates</taxon>
        <taxon>Haplorrhini</taxon>
        <taxon>Catarrhini</taxon>
        <taxon>Hominidae</taxon>
        <taxon>Homo</taxon>
    </lineage>
</organism>
<reference key="1">
    <citation type="journal article" date="1992" name="J. Biol. Chem.">
        <title>Cloning and functional expression of a human neuropeptide Y/peptide YY receptor of the Y1 type.</title>
        <authorList>
            <person name="Larhammar D."/>
            <person name="Blomqvist A.G."/>
            <person name="Yee F."/>
            <person name="Jazin E.E."/>
            <person name="Yoo H."/>
            <person name="Wahlestedt C.R."/>
        </authorList>
    </citation>
    <scope>NUCLEOTIDE SEQUENCE [MRNA]</scope>
    <source>
        <tissue>Brain</tissue>
    </source>
</reference>
<reference key="2">
    <citation type="journal article" date="1992" name="Proc. Natl. Acad. Sci. U.S.A.">
        <title>Cloned human neuropeptide Y receptor couples to two different second messenger systems.</title>
        <authorList>
            <person name="Herzog H."/>
            <person name="Hort Y.J."/>
            <person name="Ball H.J."/>
            <person name="Hayes G."/>
            <person name="Shine J."/>
            <person name="Selbie L.A."/>
        </authorList>
    </citation>
    <scope>NUCLEOTIDE SEQUENCE [MRNA]</scope>
    <source>
        <tissue>Brain</tissue>
    </source>
</reference>
<reference key="3">
    <citation type="journal article" date="1993" name="J. Biol. Chem.">
        <title>Genomic organization, localization, and allelic differences in the gene for the human neuropeptide Y Y1 receptor.</title>
        <authorList>
            <person name="Herzog H."/>
            <person name="Baumgartner M."/>
            <person name="Vivero C."/>
            <person name="Selbie L.A."/>
            <person name="Auer B."/>
            <person name="Shine J."/>
        </authorList>
    </citation>
    <scope>NUCLEOTIDE SEQUENCE [MRNA]</scope>
    <source>
        <tissue>Blood</tissue>
    </source>
</reference>
<reference key="4">
    <citation type="submission" date="2004-02" db="EMBL/GenBank/DDBJ databases">
        <title>cDNA clones of human proteins involved in signal transduction sequenced by the Guthrie cDNA resource center (www.cdna.org).</title>
        <authorList>
            <person name="Kopatz S.A."/>
            <person name="Aronstam R.S."/>
            <person name="Sharma S.V."/>
        </authorList>
    </citation>
    <scope>NUCLEOTIDE SEQUENCE [LARGE SCALE MRNA]</scope>
    <source>
        <tissue>Brain</tissue>
    </source>
</reference>
<reference key="5">
    <citation type="journal article" date="2004" name="Nat. Genet.">
        <title>Complete sequencing and characterization of 21,243 full-length human cDNAs.</title>
        <authorList>
            <person name="Ota T."/>
            <person name="Suzuki Y."/>
            <person name="Nishikawa T."/>
            <person name="Otsuki T."/>
            <person name="Sugiyama T."/>
            <person name="Irie R."/>
            <person name="Wakamatsu A."/>
            <person name="Hayashi K."/>
            <person name="Sato H."/>
            <person name="Nagai K."/>
            <person name="Kimura K."/>
            <person name="Makita H."/>
            <person name="Sekine M."/>
            <person name="Obayashi M."/>
            <person name="Nishi T."/>
            <person name="Shibahara T."/>
            <person name="Tanaka T."/>
            <person name="Ishii S."/>
            <person name="Yamamoto J."/>
            <person name="Saito K."/>
            <person name="Kawai Y."/>
            <person name="Isono Y."/>
            <person name="Nakamura Y."/>
            <person name="Nagahari K."/>
            <person name="Murakami K."/>
            <person name="Yasuda T."/>
            <person name="Iwayanagi T."/>
            <person name="Wagatsuma M."/>
            <person name="Shiratori A."/>
            <person name="Sudo H."/>
            <person name="Hosoiri T."/>
            <person name="Kaku Y."/>
            <person name="Kodaira H."/>
            <person name="Kondo H."/>
            <person name="Sugawara M."/>
            <person name="Takahashi M."/>
            <person name="Kanda K."/>
            <person name="Yokoi T."/>
            <person name="Furuya T."/>
            <person name="Kikkawa E."/>
            <person name="Omura Y."/>
            <person name="Abe K."/>
            <person name="Kamihara K."/>
            <person name="Katsuta N."/>
            <person name="Sato K."/>
            <person name="Tanikawa M."/>
            <person name="Yamazaki M."/>
            <person name="Ninomiya K."/>
            <person name="Ishibashi T."/>
            <person name="Yamashita H."/>
            <person name="Murakawa K."/>
            <person name="Fujimori K."/>
            <person name="Tanai H."/>
            <person name="Kimata M."/>
            <person name="Watanabe M."/>
            <person name="Hiraoka S."/>
            <person name="Chiba Y."/>
            <person name="Ishida S."/>
            <person name="Ono Y."/>
            <person name="Takiguchi S."/>
            <person name="Watanabe S."/>
            <person name="Yosida M."/>
            <person name="Hotuta T."/>
            <person name="Kusano J."/>
            <person name="Kanehori K."/>
            <person name="Takahashi-Fujii A."/>
            <person name="Hara H."/>
            <person name="Tanase T.-O."/>
            <person name="Nomura Y."/>
            <person name="Togiya S."/>
            <person name="Komai F."/>
            <person name="Hara R."/>
            <person name="Takeuchi K."/>
            <person name="Arita M."/>
            <person name="Imose N."/>
            <person name="Musashino K."/>
            <person name="Yuuki H."/>
            <person name="Oshima A."/>
            <person name="Sasaki N."/>
            <person name="Aotsuka S."/>
            <person name="Yoshikawa Y."/>
            <person name="Matsunawa H."/>
            <person name="Ichihara T."/>
            <person name="Shiohata N."/>
            <person name="Sano S."/>
            <person name="Moriya S."/>
            <person name="Momiyama H."/>
            <person name="Satoh N."/>
            <person name="Takami S."/>
            <person name="Terashima Y."/>
            <person name="Suzuki O."/>
            <person name="Nakagawa S."/>
            <person name="Senoh A."/>
            <person name="Mizoguchi H."/>
            <person name="Goto Y."/>
            <person name="Shimizu F."/>
            <person name="Wakebe H."/>
            <person name="Hishigaki H."/>
            <person name="Watanabe T."/>
            <person name="Sugiyama A."/>
            <person name="Takemoto M."/>
            <person name="Kawakami B."/>
            <person name="Yamazaki M."/>
            <person name="Watanabe K."/>
            <person name="Kumagai A."/>
            <person name="Itakura S."/>
            <person name="Fukuzumi Y."/>
            <person name="Fujimori Y."/>
            <person name="Komiyama M."/>
            <person name="Tashiro H."/>
            <person name="Tanigami A."/>
            <person name="Fujiwara T."/>
            <person name="Ono T."/>
            <person name="Yamada K."/>
            <person name="Fujii Y."/>
            <person name="Ozaki K."/>
            <person name="Hirao M."/>
            <person name="Ohmori Y."/>
            <person name="Kawabata A."/>
            <person name="Hikiji T."/>
            <person name="Kobatake N."/>
            <person name="Inagaki H."/>
            <person name="Ikema Y."/>
            <person name="Okamoto S."/>
            <person name="Okitani R."/>
            <person name="Kawakami T."/>
            <person name="Noguchi S."/>
            <person name="Itoh T."/>
            <person name="Shigeta K."/>
            <person name="Senba T."/>
            <person name="Matsumura K."/>
            <person name="Nakajima Y."/>
            <person name="Mizuno T."/>
            <person name="Morinaga M."/>
            <person name="Sasaki M."/>
            <person name="Togashi T."/>
            <person name="Oyama M."/>
            <person name="Hata H."/>
            <person name="Watanabe M."/>
            <person name="Komatsu T."/>
            <person name="Mizushima-Sugano J."/>
            <person name="Satoh T."/>
            <person name="Shirai Y."/>
            <person name="Takahashi Y."/>
            <person name="Nakagawa K."/>
            <person name="Okumura K."/>
            <person name="Nagase T."/>
            <person name="Nomura N."/>
            <person name="Kikuchi H."/>
            <person name="Masuho Y."/>
            <person name="Yamashita R."/>
            <person name="Nakai K."/>
            <person name="Yada T."/>
            <person name="Nakamura Y."/>
            <person name="Ohara O."/>
            <person name="Isogai T."/>
            <person name="Sugano S."/>
        </authorList>
    </citation>
    <scope>NUCLEOTIDE SEQUENCE [LARGE SCALE MRNA]</scope>
    <source>
        <tissue>Brain</tissue>
    </source>
</reference>
<reference key="6">
    <citation type="submission" date="2005-09" db="EMBL/GenBank/DDBJ databases">
        <authorList>
            <person name="Mural R.J."/>
            <person name="Istrail S."/>
            <person name="Sutton G.G."/>
            <person name="Florea L."/>
            <person name="Halpern A.L."/>
            <person name="Mobarry C.M."/>
            <person name="Lippert R."/>
            <person name="Walenz B."/>
            <person name="Shatkay H."/>
            <person name="Dew I."/>
            <person name="Miller J.R."/>
            <person name="Flanigan M.J."/>
            <person name="Edwards N.J."/>
            <person name="Bolanos R."/>
            <person name="Fasulo D."/>
            <person name="Halldorsson B.V."/>
            <person name="Hannenhalli S."/>
            <person name="Turner R."/>
            <person name="Yooseph S."/>
            <person name="Lu F."/>
            <person name="Nusskern D.R."/>
            <person name="Shue B.C."/>
            <person name="Zheng X.H."/>
            <person name="Zhong F."/>
            <person name="Delcher A.L."/>
            <person name="Huson D.H."/>
            <person name="Kravitz S.A."/>
            <person name="Mouchard L."/>
            <person name="Reinert K."/>
            <person name="Remington K.A."/>
            <person name="Clark A.G."/>
            <person name="Waterman M.S."/>
            <person name="Eichler E.E."/>
            <person name="Adams M.D."/>
            <person name="Hunkapiller M.W."/>
            <person name="Myers E.W."/>
            <person name="Venter J.C."/>
        </authorList>
    </citation>
    <scope>NUCLEOTIDE SEQUENCE [LARGE SCALE GENOMIC DNA]</scope>
</reference>
<reference key="7">
    <citation type="journal article" date="2004" name="Genome Res.">
        <title>The status, quality, and expansion of the NIH full-length cDNA project: the Mammalian Gene Collection (MGC).</title>
        <authorList>
            <consortium name="The MGC Project Team"/>
        </authorList>
    </citation>
    <scope>NUCLEOTIDE SEQUENCE [LARGE SCALE MRNA]</scope>
    <source>
        <tissue>Pancreas</tissue>
        <tissue>Testis</tissue>
    </source>
</reference>
<keyword id="KW-0002">3D-structure</keyword>
<keyword id="KW-1003">Cell membrane</keyword>
<keyword id="KW-1015">Disulfide bond</keyword>
<keyword id="KW-0297">G-protein coupled receptor</keyword>
<keyword id="KW-0325">Glycoprotein</keyword>
<keyword id="KW-0449">Lipoprotein</keyword>
<keyword id="KW-0472">Membrane</keyword>
<keyword id="KW-0564">Palmitate</keyword>
<keyword id="KW-0597">Phosphoprotein</keyword>
<keyword id="KW-1267">Proteomics identification</keyword>
<keyword id="KW-0675">Receptor</keyword>
<keyword id="KW-1185">Reference proteome</keyword>
<keyword id="KW-0807">Transducer</keyword>
<keyword id="KW-0812">Transmembrane</keyword>
<keyword id="KW-1133">Transmembrane helix</keyword>